<name>RL6_PAEAT</name>
<feature type="chain" id="PRO_1000055192" description="Large ribosomal subunit protein uL6">
    <location>
        <begin position="1"/>
        <end position="178"/>
    </location>
</feature>
<dbReference type="EMBL" id="CP000474">
    <property type="protein sequence ID" value="ABM07179.1"/>
    <property type="molecule type" value="Genomic_DNA"/>
</dbReference>
<dbReference type="RefSeq" id="WP_011775583.1">
    <property type="nucleotide sequence ID" value="NC_008711.1"/>
</dbReference>
<dbReference type="SMR" id="A1R8T1"/>
<dbReference type="STRING" id="290340.AAur_2934"/>
<dbReference type="KEGG" id="aau:AAur_2934"/>
<dbReference type="eggNOG" id="COG0097">
    <property type="taxonomic scope" value="Bacteria"/>
</dbReference>
<dbReference type="HOGENOM" id="CLU_065464_1_2_11"/>
<dbReference type="OrthoDB" id="9805007at2"/>
<dbReference type="Proteomes" id="UP000000637">
    <property type="component" value="Chromosome"/>
</dbReference>
<dbReference type="GO" id="GO:0022625">
    <property type="term" value="C:cytosolic large ribosomal subunit"/>
    <property type="evidence" value="ECO:0007669"/>
    <property type="project" value="TreeGrafter"/>
</dbReference>
<dbReference type="GO" id="GO:0019843">
    <property type="term" value="F:rRNA binding"/>
    <property type="evidence" value="ECO:0007669"/>
    <property type="project" value="UniProtKB-UniRule"/>
</dbReference>
<dbReference type="GO" id="GO:0003735">
    <property type="term" value="F:structural constituent of ribosome"/>
    <property type="evidence" value="ECO:0007669"/>
    <property type="project" value="InterPro"/>
</dbReference>
<dbReference type="GO" id="GO:0002181">
    <property type="term" value="P:cytoplasmic translation"/>
    <property type="evidence" value="ECO:0007669"/>
    <property type="project" value="TreeGrafter"/>
</dbReference>
<dbReference type="FunFam" id="3.90.930.12:FF:000001">
    <property type="entry name" value="50S ribosomal protein L6"/>
    <property type="match status" value="1"/>
</dbReference>
<dbReference type="FunFam" id="3.90.930.12:FF:000002">
    <property type="entry name" value="50S ribosomal protein L6"/>
    <property type="match status" value="1"/>
</dbReference>
<dbReference type="Gene3D" id="3.90.930.12">
    <property type="entry name" value="Ribosomal protein L6, alpha-beta domain"/>
    <property type="match status" value="2"/>
</dbReference>
<dbReference type="HAMAP" id="MF_01365_B">
    <property type="entry name" value="Ribosomal_uL6_B"/>
    <property type="match status" value="1"/>
</dbReference>
<dbReference type="InterPro" id="IPR000702">
    <property type="entry name" value="Ribosomal_uL6-like"/>
</dbReference>
<dbReference type="InterPro" id="IPR036789">
    <property type="entry name" value="Ribosomal_uL6-like_a/b-dom_sf"/>
</dbReference>
<dbReference type="InterPro" id="IPR020040">
    <property type="entry name" value="Ribosomal_uL6_a/b-dom"/>
</dbReference>
<dbReference type="InterPro" id="IPR019906">
    <property type="entry name" value="Ribosomal_uL6_bac-type"/>
</dbReference>
<dbReference type="InterPro" id="IPR002358">
    <property type="entry name" value="Ribosomal_uL6_CS"/>
</dbReference>
<dbReference type="NCBIfam" id="TIGR03654">
    <property type="entry name" value="L6_bact"/>
    <property type="match status" value="1"/>
</dbReference>
<dbReference type="PANTHER" id="PTHR11655">
    <property type="entry name" value="60S/50S RIBOSOMAL PROTEIN L6/L9"/>
    <property type="match status" value="1"/>
</dbReference>
<dbReference type="PANTHER" id="PTHR11655:SF14">
    <property type="entry name" value="LARGE RIBOSOMAL SUBUNIT PROTEIN UL6M"/>
    <property type="match status" value="1"/>
</dbReference>
<dbReference type="Pfam" id="PF00347">
    <property type="entry name" value="Ribosomal_L6"/>
    <property type="match status" value="2"/>
</dbReference>
<dbReference type="PIRSF" id="PIRSF002162">
    <property type="entry name" value="Ribosomal_L6"/>
    <property type="match status" value="1"/>
</dbReference>
<dbReference type="PRINTS" id="PR00059">
    <property type="entry name" value="RIBOSOMALL6"/>
</dbReference>
<dbReference type="SUPFAM" id="SSF56053">
    <property type="entry name" value="Ribosomal protein L6"/>
    <property type="match status" value="2"/>
</dbReference>
<dbReference type="PROSITE" id="PS00525">
    <property type="entry name" value="RIBOSOMAL_L6_1"/>
    <property type="match status" value="1"/>
</dbReference>
<reference key="1">
    <citation type="journal article" date="2006" name="PLoS Genet.">
        <title>Secrets of soil survival revealed by the genome sequence of Arthrobacter aurescens TC1.</title>
        <authorList>
            <person name="Mongodin E.F."/>
            <person name="Shapir N."/>
            <person name="Daugherty S.C."/>
            <person name="DeBoy R.T."/>
            <person name="Emerson J.B."/>
            <person name="Shvartzbeyn A."/>
            <person name="Radune D."/>
            <person name="Vamathevan J."/>
            <person name="Riggs F."/>
            <person name="Grinberg V."/>
            <person name="Khouri H.M."/>
            <person name="Wackett L.P."/>
            <person name="Nelson K.E."/>
            <person name="Sadowsky M.J."/>
        </authorList>
    </citation>
    <scope>NUCLEOTIDE SEQUENCE [LARGE SCALE GENOMIC DNA]</scope>
    <source>
        <strain>TC1</strain>
    </source>
</reference>
<protein>
    <recommendedName>
        <fullName evidence="1">Large ribosomal subunit protein uL6</fullName>
    </recommendedName>
    <alternativeName>
        <fullName evidence="2">50S ribosomal protein L6</fullName>
    </alternativeName>
</protein>
<keyword id="KW-0687">Ribonucleoprotein</keyword>
<keyword id="KW-0689">Ribosomal protein</keyword>
<keyword id="KW-0694">RNA-binding</keyword>
<keyword id="KW-0699">rRNA-binding</keyword>
<proteinExistence type="inferred from homology"/>
<evidence type="ECO:0000255" key="1">
    <source>
        <dbReference type="HAMAP-Rule" id="MF_01365"/>
    </source>
</evidence>
<evidence type="ECO:0000305" key="2"/>
<organism>
    <name type="scientific">Paenarthrobacter aurescens (strain TC1)</name>
    <dbReference type="NCBI Taxonomy" id="290340"/>
    <lineage>
        <taxon>Bacteria</taxon>
        <taxon>Bacillati</taxon>
        <taxon>Actinomycetota</taxon>
        <taxon>Actinomycetes</taxon>
        <taxon>Micrococcales</taxon>
        <taxon>Micrococcaceae</taxon>
        <taxon>Paenarthrobacter</taxon>
    </lineage>
</organism>
<gene>
    <name evidence="1" type="primary">rplF</name>
    <name type="ordered locus">AAur_2934</name>
</gene>
<accession>A1R8T1</accession>
<comment type="function">
    <text evidence="1">This protein binds to the 23S rRNA, and is important in its secondary structure. It is located near the subunit interface in the base of the L7/L12 stalk, and near the tRNA binding site of the peptidyltransferase center.</text>
</comment>
<comment type="subunit">
    <text evidence="1">Part of the 50S ribosomal subunit.</text>
</comment>
<comment type="similarity">
    <text evidence="1">Belongs to the universal ribosomal protein uL6 family.</text>
</comment>
<sequence>MSRIGRLPITVPAGVEVKLDGSVISVKGAKGELSHTVASPIEVTQEENTLTVTRPNDERNSRSLHGLTRTLIANMIQGVTEGYEKKLEIVGTGYRVQAKGSDLEFALGYSHPVNVSAPEGITFVVEGPTKLSVAGINKQQVGEVAANIRKLRKPDPYKGKGVRYAGEVIRRKVGKAGK</sequence>